<keyword id="KW-0963">Cytoplasm</keyword>
<keyword id="KW-0206">Cytoskeleton</keyword>
<keyword id="KW-0342">GTP-binding</keyword>
<keyword id="KW-0460">Magnesium</keyword>
<keyword id="KW-0479">Metal-binding</keyword>
<keyword id="KW-0493">Microtubule</keyword>
<keyword id="KW-0547">Nucleotide-binding</keyword>
<evidence type="ECO:0000250" key="1">
    <source>
        <dbReference type="UniProtKB" id="P68363"/>
    </source>
</evidence>
<evidence type="ECO:0000250" key="2">
    <source>
        <dbReference type="UniProtKB" id="Q13509"/>
    </source>
</evidence>
<evidence type="ECO:0000305" key="3"/>
<protein>
    <recommendedName>
        <fullName>Tubulin beta chain</fullName>
    </recommendedName>
    <alternativeName>
        <fullName>Beta-tubulin</fullName>
    </alternativeName>
</protein>
<gene>
    <name type="primary">TUB2</name>
</gene>
<comment type="function">
    <text>Tubulin is the major constituent of microtubules, a cylinder consisting of laterally associated linear protofilaments composed of alpha- and beta-tubulin heterodimers. Microtubules grow by the addition of GTP-tubulin dimers to the microtubule end, where a stabilizing cap forms. Below the cap, tubulin dimers are in GDP-bound state, owing to GTPase activity of alpha-tubulin.</text>
</comment>
<comment type="cofactor">
    <cofactor evidence="1">
        <name>Mg(2+)</name>
        <dbReference type="ChEBI" id="CHEBI:18420"/>
    </cofactor>
</comment>
<comment type="subunit">
    <text>Dimer of alpha and beta chains. A typical microtubule is a hollow water-filled tube with an outer diameter of 25 nm and an inner diameter of 15 nM. Alpha-beta heterodimers associate head-to-tail to form protofilaments running lengthwise along the microtubule wall with the beta-tubulin subunit facing the microtubule plus end conferring a structural polarity. Microtubules usually have 13 protofilaments but different protofilament numbers can be found in some organisms and specialized cells.</text>
</comment>
<comment type="subcellular location">
    <subcellularLocation>
        <location>Cytoplasm</location>
        <location>Cytoskeleton</location>
    </subcellularLocation>
</comment>
<comment type="similarity">
    <text evidence="3">Belongs to the tubulin family.</text>
</comment>
<feature type="chain" id="PRO_0000048397" description="Tubulin beta chain">
    <location>
        <begin position="1"/>
        <end position="449"/>
    </location>
</feature>
<feature type="binding site" evidence="2">
    <location>
        <position position="11"/>
    </location>
    <ligand>
        <name>GTP</name>
        <dbReference type="ChEBI" id="CHEBI:37565"/>
    </ligand>
</feature>
<feature type="binding site" evidence="1">
    <location>
        <position position="69"/>
    </location>
    <ligand>
        <name>GTP</name>
        <dbReference type="ChEBI" id="CHEBI:37565"/>
    </ligand>
</feature>
<feature type="binding site" evidence="1">
    <location>
        <position position="69"/>
    </location>
    <ligand>
        <name>Mg(2+)</name>
        <dbReference type="ChEBI" id="CHEBI:18420"/>
    </ligand>
</feature>
<feature type="binding site" evidence="2">
    <location>
        <position position="138"/>
    </location>
    <ligand>
        <name>GTP</name>
        <dbReference type="ChEBI" id="CHEBI:37565"/>
    </ligand>
</feature>
<feature type="binding site" evidence="2">
    <location>
        <position position="142"/>
    </location>
    <ligand>
        <name>GTP</name>
        <dbReference type="ChEBI" id="CHEBI:37565"/>
    </ligand>
</feature>
<feature type="binding site" evidence="2">
    <location>
        <position position="143"/>
    </location>
    <ligand>
        <name>GTP</name>
        <dbReference type="ChEBI" id="CHEBI:37565"/>
    </ligand>
</feature>
<feature type="binding site" evidence="2">
    <location>
        <position position="144"/>
    </location>
    <ligand>
        <name>GTP</name>
        <dbReference type="ChEBI" id="CHEBI:37565"/>
    </ligand>
</feature>
<feature type="binding site" evidence="2">
    <location>
        <position position="204"/>
    </location>
    <ligand>
        <name>GTP</name>
        <dbReference type="ChEBI" id="CHEBI:37565"/>
    </ligand>
</feature>
<feature type="binding site" evidence="2">
    <location>
        <position position="226"/>
    </location>
    <ligand>
        <name>GTP</name>
        <dbReference type="ChEBI" id="CHEBI:37565"/>
    </ligand>
</feature>
<dbReference type="EMBL" id="M19398">
    <property type="protein sequence ID" value="AAA34375.1"/>
    <property type="molecule type" value="Genomic_DNA"/>
</dbReference>
<dbReference type="PIR" id="JT0276">
    <property type="entry name" value="UBCKBA"/>
</dbReference>
<dbReference type="SMR" id="P10875"/>
<dbReference type="ChEMBL" id="CHEMBL3988634"/>
<dbReference type="DrugCentral" id="P10875"/>
<dbReference type="VEuPathDB" id="FungiDB:C1_00710C_A"/>
<dbReference type="VEuPathDB" id="FungiDB:CAWG_01302"/>
<dbReference type="GO" id="GO:0005737">
    <property type="term" value="C:cytoplasm"/>
    <property type="evidence" value="ECO:0007669"/>
    <property type="project" value="UniProtKB-KW"/>
</dbReference>
<dbReference type="GO" id="GO:0005874">
    <property type="term" value="C:microtubule"/>
    <property type="evidence" value="ECO:0007669"/>
    <property type="project" value="UniProtKB-KW"/>
</dbReference>
<dbReference type="GO" id="GO:0045298">
    <property type="term" value="C:tubulin complex"/>
    <property type="evidence" value="ECO:0007669"/>
    <property type="project" value="EnsemblFungi"/>
</dbReference>
<dbReference type="GO" id="GO:0005525">
    <property type="term" value="F:GTP binding"/>
    <property type="evidence" value="ECO:0007669"/>
    <property type="project" value="UniProtKB-KW"/>
</dbReference>
<dbReference type="GO" id="GO:0003924">
    <property type="term" value="F:GTPase activity"/>
    <property type="evidence" value="ECO:0007669"/>
    <property type="project" value="EnsemblFungi"/>
</dbReference>
<dbReference type="GO" id="GO:0046872">
    <property type="term" value="F:metal ion binding"/>
    <property type="evidence" value="ECO:0007669"/>
    <property type="project" value="UniProtKB-KW"/>
</dbReference>
<dbReference type="GO" id="GO:0005200">
    <property type="term" value="F:structural constituent of cytoskeleton"/>
    <property type="evidence" value="ECO:0007669"/>
    <property type="project" value="EnsemblFungi"/>
</dbReference>
<dbReference type="GO" id="GO:0031122">
    <property type="term" value="P:cytoplasmic microtubule organization"/>
    <property type="evidence" value="ECO:0007669"/>
    <property type="project" value="EnsemblFungi"/>
</dbReference>
<dbReference type="GO" id="GO:0090307">
    <property type="term" value="P:mitotic spindle assembly"/>
    <property type="evidence" value="ECO:0007669"/>
    <property type="project" value="EnsemblFungi"/>
</dbReference>
<dbReference type="GO" id="GO:0000022">
    <property type="term" value="P:mitotic spindle elongation"/>
    <property type="evidence" value="ECO:0007669"/>
    <property type="project" value="EnsemblFungi"/>
</dbReference>
<dbReference type="GO" id="GO:0090316">
    <property type="term" value="P:positive regulation of intracellular protein transport"/>
    <property type="evidence" value="ECO:0007669"/>
    <property type="project" value="EnsemblFungi"/>
</dbReference>
<dbReference type="CDD" id="cd02187">
    <property type="entry name" value="beta_tubulin"/>
    <property type="match status" value="1"/>
</dbReference>
<dbReference type="FunFam" id="1.10.287.600:FF:000003">
    <property type="entry name" value="Tubulin beta chain"/>
    <property type="match status" value="1"/>
</dbReference>
<dbReference type="FunFam" id="3.30.1330.20:FF:000002">
    <property type="entry name" value="Tubulin beta chain"/>
    <property type="match status" value="1"/>
</dbReference>
<dbReference type="FunFam" id="3.40.50.1440:FF:000009">
    <property type="entry name" value="Tubulin beta chain"/>
    <property type="match status" value="1"/>
</dbReference>
<dbReference type="Gene3D" id="1.10.287.600">
    <property type="entry name" value="Helix hairpin bin"/>
    <property type="match status" value="1"/>
</dbReference>
<dbReference type="Gene3D" id="3.30.1330.20">
    <property type="entry name" value="Tubulin/FtsZ, C-terminal domain"/>
    <property type="match status" value="1"/>
</dbReference>
<dbReference type="Gene3D" id="3.40.50.1440">
    <property type="entry name" value="Tubulin/FtsZ, GTPase domain"/>
    <property type="match status" value="1"/>
</dbReference>
<dbReference type="InterPro" id="IPR013838">
    <property type="entry name" value="Beta-tubulin_BS"/>
</dbReference>
<dbReference type="InterPro" id="IPR002453">
    <property type="entry name" value="Beta_tubulin"/>
</dbReference>
<dbReference type="InterPro" id="IPR008280">
    <property type="entry name" value="Tub_FtsZ_C"/>
</dbReference>
<dbReference type="InterPro" id="IPR000217">
    <property type="entry name" value="Tubulin"/>
</dbReference>
<dbReference type="InterPro" id="IPR037103">
    <property type="entry name" value="Tubulin/FtsZ-like_C"/>
</dbReference>
<dbReference type="InterPro" id="IPR018316">
    <property type="entry name" value="Tubulin/FtsZ_2-layer-sand-dom"/>
</dbReference>
<dbReference type="InterPro" id="IPR036525">
    <property type="entry name" value="Tubulin/FtsZ_GTPase_sf"/>
</dbReference>
<dbReference type="InterPro" id="IPR023123">
    <property type="entry name" value="Tubulin_C"/>
</dbReference>
<dbReference type="InterPro" id="IPR017975">
    <property type="entry name" value="Tubulin_CS"/>
</dbReference>
<dbReference type="InterPro" id="IPR003008">
    <property type="entry name" value="Tubulin_FtsZ_GTPase"/>
</dbReference>
<dbReference type="PANTHER" id="PTHR11588">
    <property type="entry name" value="TUBULIN"/>
    <property type="match status" value="1"/>
</dbReference>
<dbReference type="Pfam" id="PF00091">
    <property type="entry name" value="Tubulin"/>
    <property type="match status" value="1"/>
</dbReference>
<dbReference type="Pfam" id="PF03953">
    <property type="entry name" value="Tubulin_C"/>
    <property type="match status" value="1"/>
</dbReference>
<dbReference type="PRINTS" id="PR01163">
    <property type="entry name" value="BETATUBULIN"/>
</dbReference>
<dbReference type="PRINTS" id="PR01161">
    <property type="entry name" value="TUBULIN"/>
</dbReference>
<dbReference type="SMART" id="SM00864">
    <property type="entry name" value="Tubulin"/>
    <property type="match status" value="1"/>
</dbReference>
<dbReference type="SMART" id="SM00865">
    <property type="entry name" value="Tubulin_C"/>
    <property type="match status" value="1"/>
</dbReference>
<dbReference type="SUPFAM" id="SSF55307">
    <property type="entry name" value="Tubulin C-terminal domain-like"/>
    <property type="match status" value="1"/>
</dbReference>
<dbReference type="SUPFAM" id="SSF52490">
    <property type="entry name" value="Tubulin nucleotide-binding domain-like"/>
    <property type="match status" value="1"/>
</dbReference>
<dbReference type="PROSITE" id="PS00227">
    <property type="entry name" value="TUBULIN"/>
    <property type="match status" value="1"/>
</dbReference>
<dbReference type="PROSITE" id="PS00228">
    <property type="entry name" value="TUBULIN_B_AUTOREG"/>
    <property type="match status" value="1"/>
</dbReference>
<name>TBB_CANAX</name>
<proteinExistence type="inferred from homology"/>
<organism>
    <name type="scientific">Candida albicans</name>
    <name type="common">Yeast</name>
    <dbReference type="NCBI Taxonomy" id="5476"/>
    <lineage>
        <taxon>Eukaryota</taxon>
        <taxon>Fungi</taxon>
        <taxon>Dikarya</taxon>
        <taxon>Ascomycota</taxon>
        <taxon>Saccharomycotina</taxon>
        <taxon>Pichiomycetes</taxon>
        <taxon>Debaryomycetaceae</taxon>
        <taxon>Candida/Lodderomyces clade</taxon>
        <taxon>Candida</taxon>
    </lineage>
</organism>
<accession>P10875</accession>
<sequence length="449" mass="49942">MREIIHLSTGQCGNQIGAAFWETICGEHGLDNNGTYVGNNELQKSKLDVYFNEATSGKYVPRAVLVDLEPGTIDNVKTSQIGNLFRPDNFIFGQSSAGNVWAKGHYTEGAELVDSVLDVVRREAEGCDSLQGFQITHSLGGGTGSGMGTLLISKIREEFPDTMMATFSVVPSPKVSDTVIEPYNATLSVHQLVENSDETFCIDNEALYNICQNTLKLPQPSYAELNNLVSSVMSGVTTSLRYPGQLNSDLRKLAVNLVPFPRLHFFMVGYAPLTSMGSKSFRSVTVPELTQQMFDAKNMMAASDPRNGRYLTVAAFFRGKVSVKEVDDEMHKIQTRNSSYFVDWIPNNVQTAVCSVPPKDLDMSATFIGNSTSIQELFKRVGDQFSAMFRRKAFLHWYTSEGMDEMEFTEAESNMNDLVSEYQQYQEASIDEEELEYADEIPLEDAAME</sequence>
<reference key="1">
    <citation type="journal article" date="1988" name="Gene">
        <title>Isolation and characterization of a beta-tubulin gene from Candida albicans.</title>
        <authorList>
            <person name="Smith R.A."/>
            <person name="Allaudeen H.S."/>
            <person name="Whitman M.H."/>
            <person name="Koltin Y."/>
            <person name="Gorman J.A."/>
        </authorList>
    </citation>
    <scope>NUCLEOTIDE SEQUENCE [GENOMIC DNA]</scope>
</reference>